<dbReference type="EC" id="2.3.2.27" evidence="6"/>
<dbReference type="EMBL" id="AF542552">
    <property type="protein sequence ID" value="AAQ09535.1"/>
    <property type="molecule type" value="mRNA"/>
</dbReference>
<dbReference type="EMBL" id="AF419857">
    <property type="protein sequence ID" value="AAP97292.1"/>
    <property type="molecule type" value="mRNA"/>
</dbReference>
<dbReference type="EMBL" id="AK290749">
    <property type="protein sequence ID" value="BAF83438.1"/>
    <property type="molecule type" value="mRNA"/>
</dbReference>
<dbReference type="EMBL" id="AL390725">
    <property type="protein sequence ID" value="CAI13717.1"/>
    <property type="molecule type" value="Genomic_DNA"/>
</dbReference>
<dbReference type="EMBL" id="AL160282">
    <property type="protein sequence ID" value="CAI13717.1"/>
    <property type="status" value="JOINED"/>
    <property type="molecule type" value="Genomic_DNA"/>
</dbReference>
<dbReference type="EMBL" id="CH471244">
    <property type="protein sequence ID" value="EAW71437.1"/>
    <property type="molecule type" value="Genomic_DNA"/>
</dbReference>
<dbReference type="EMBL" id="BC054049">
    <property type="protein sequence ID" value="AAH54049.1"/>
    <property type="molecule type" value="mRNA"/>
</dbReference>
<dbReference type="EMBL" id="BC064903">
    <property type="protein sequence ID" value="AAH64903.1"/>
    <property type="molecule type" value="mRNA"/>
</dbReference>
<dbReference type="EMBL" id="AL079314">
    <property type="protein sequence ID" value="CAB45280.1"/>
    <property type="molecule type" value="mRNA"/>
</dbReference>
<dbReference type="CCDS" id="CCDS72863.1"/>
<dbReference type="RefSeq" id="NP_055270.1">
    <property type="nucleotide sequence ID" value="NM_014455.4"/>
</dbReference>
<dbReference type="SMR" id="Q9Y4L5"/>
<dbReference type="BioGRID" id="118094">
    <property type="interactions" value="140"/>
</dbReference>
<dbReference type="FunCoup" id="Q9Y4L5">
    <property type="interactions" value="2411"/>
</dbReference>
<dbReference type="IntAct" id="Q9Y4L5">
    <property type="interactions" value="82"/>
</dbReference>
<dbReference type="MINT" id="Q9Y4L5"/>
<dbReference type="STRING" id="9606.ENSP00000463650"/>
<dbReference type="MoonDB" id="Q9Y4L5">
    <property type="type" value="Predicted"/>
</dbReference>
<dbReference type="iPTMnet" id="Q9Y4L5"/>
<dbReference type="PhosphoSitePlus" id="Q9Y4L5"/>
<dbReference type="BioMuta" id="RNF115"/>
<dbReference type="DMDM" id="56405389"/>
<dbReference type="jPOST" id="Q9Y4L5"/>
<dbReference type="MassIVE" id="Q9Y4L5"/>
<dbReference type="PaxDb" id="9606-ENSP00000463650"/>
<dbReference type="PeptideAtlas" id="Q9Y4L5"/>
<dbReference type="ProteomicsDB" id="86228"/>
<dbReference type="Pumba" id="Q9Y4L5"/>
<dbReference type="Antibodypedia" id="74554">
    <property type="antibodies" value="102 antibodies from 23 providers"/>
</dbReference>
<dbReference type="DNASU" id="27246"/>
<dbReference type="Ensembl" id="ENST00000582693.5">
    <property type="protein sequence ID" value="ENSP00000463650.1"/>
    <property type="gene ID" value="ENSG00000265491.5"/>
</dbReference>
<dbReference type="GeneID" id="27246"/>
<dbReference type="KEGG" id="hsa:27246"/>
<dbReference type="MANE-Select" id="ENST00000582693.5">
    <property type="protein sequence ID" value="ENSP00000463650.1"/>
    <property type="RefSeq nucleotide sequence ID" value="NM_014455.4"/>
    <property type="RefSeq protein sequence ID" value="NP_055270.1"/>
</dbReference>
<dbReference type="UCSC" id="uc031utf.2">
    <property type="organism name" value="human"/>
</dbReference>
<dbReference type="AGR" id="HGNC:18154"/>
<dbReference type="CTD" id="27246"/>
<dbReference type="DisGeNET" id="27246"/>
<dbReference type="GeneCards" id="RNF115"/>
<dbReference type="HGNC" id="HGNC:18154">
    <property type="gene designation" value="RNF115"/>
</dbReference>
<dbReference type="HPA" id="ENSG00000265491">
    <property type="expression patterns" value="Low tissue specificity"/>
</dbReference>
<dbReference type="MIM" id="619535">
    <property type="type" value="gene"/>
</dbReference>
<dbReference type="neXtProt" id="NX_Q9Y4L5"/>
<dbReference type="OpenTargets" id="ENSG00000265491"/>
<dbReference type="PharmGKB" id="PA162401519"/>
<dbReference type="VEuPathDB" id="HostDB:ENSG00000265491"/>
<dbReference type="eggNOG" id="KOG0800">
    <property type="taxonomic scope" value="Eukaryota"/>
</dbReference>
<dbReference type="GeneTree" id="ENSGT00940000157203"/>
<dbReference type="HOGENOM" id="CLU_034892_0_2_1"/>
<dbReference type="InParanoid" id="Q9Y4L5"/>
<dbReference type="OMA" id="MVPDPHC"/>
<dbReference type="OrthoDB" id="8062037at2759"/>
<dbReference type="PAN-GO" id="Q9Y4L5">
    <property type="GO annotations" value="0 GO annotations based on evolutionary models"/>
</dbReference>
<dbReference type="PhylomeDB" id="Q9Y4L5"/>
<dbReference type="TreeFam" id="TF317985"/>
<dbReference type="PathwayCommons" id="Q9Y4L5"/>
<dbReference type="Reactome" id="R-HSA-983168">
    <property type="pathway name" value="Antigen processing: Ubiquitination &amp; Proteasome degradation"/>
</dbReference>
<dbReference type="SignaLink" id="Q9Y4L5"/>
<dbReference type="SIGNOR" id="Q9Y4L5"/>
<dbReference type="UniPathway" id="UPA00143"/>
<dbReference type="BioGRID-ORCS" id="27246">
    <property type="hits" value="23 hits in 1189 CRISPR screens"/>
</dbReference>
<dbReference type="ChiTaRS" id="RNF115">
    <property type="organism name" value="human"/>
</dbReference>
<dbReference type="GeneWiki" id="ZNF364"/>
<dbReference type="GenomeRNAi" id="27246"/>
<dbReference type="Pharos" id="Q9Y4L5">
    <property type="development level" value="Tbio"/>
</dbReference>
<dbReference type="PRO" id="PR:Q9Y4L5"/>
<dbReference type="Proteomes" id="UP000005640">
    <property type="component" value="Chromosome 1"/>
</dbReference>
<dbReference type="RNAct" id="Q9Y4L5">
    <property type="molecule type" value="protein"/>
</dbReference>
<dbReference type="Bgee" id="ENSG00000265491">
    <property type="expression patterns" value="Expressed in gluteal muscle and 207 other cell types or tissues"/>
</dbReference>
<dbReference type="GO" id="GO:0005737">
    <property type="term" value="C:cytoplasm"/>
    <property type="evidence" value="ECO:0000318"/>
    <property type="project" value="GO_Central"/>
</dbReference>
<dbReference type="GO" id="GO:0005829">
    <property type="term" value="C:cytosol"/>
    <property type="evidence" value="ECO:0000250"/>
    <property type="project" value="UniProtKB"/>
</dbReference>
<dbReference type="GO" id="GO:0005783">
    <property type="term" value="C:endoplasmic reticulum"/>
    <property type="evidence" value="ECO:0000314"/>
    <property type="project" value="UniProt"/>
</dbReference>
<dbReference type="GO" id="GO:0005794">
    <property type="term" value="C:Golgi apparatus"/>
    <property type="evidence" value="ECO:0007669"/>
    <property type="project" value="UniProtKB-SubCell"/>
</dbReference>
<dbReference type="GO" id="GO:0005634">
    <property type="term" value="C:nucleus"/>
    <property type="evidence" value="ECO:0007669"/>
    <property type="project" value="UniProtKB-SubCell"/>
</dbReference>
<dbReference type="GO" id="GO:0061630">
    <property type="term" value="F:ubiquitin protein ligase activity"/>
    <property type="evidence" value="ECO:0000314"/>
    <property type="project" value="UniProt"/>
</dbReference>
<dbReference type="GO" id="GO:0004842">
    <property type="term" value="F:ubiquitin-protein transferase activity"/>
    <property type="evidence" value="ECO:0000314"/>
    <property type="project" value="UniProtKB"/>
</dbReference>
<dbReference type="GO" id="GO:0008270">
    <property type="term" value="F:zinc ion binding"/>
    <property type="evidence" value="ECO:0007669"/>
    <property type="project" value="UniProtKB-KW"/>
</dbReference>
<dbReference type="GO" id="GO:0042059">
    <property type="term" value="P:negative regulation of epidermal growth factor receptor signaling pathway"/>
    <property type="evidence" value="ECO:0000315"/>
    <property type="project" value="UniProtKB"/>
</dbReference>
<dbReference type="GO" id="GO:0034122">
    <property type="term" value="P:negative regulation of toll-like receptor signaling pathway"/>
    <property type="evidence" value="ECO:0000314"/>
    <property type="project" value="UniProt"/>
</dbReference>
<dbReference type="GO" id="GO:0051865">
    <property type="term" value="P:protein autoubiquitination"/>
    <property type="evidence" value="ECO:0000314"/>
    <property type="project" value="UniProtKB"/>
</dbReference>
<dbReference type="GO" id="GO:0070979">
    <property type="term" value="P:protein K11-linked ubiquitination"/>
    <property type="evidence" value="ECO:0000314"/>
    <property type="project" value="UniProt"/>
</dbReference>
<dbReference type="GO" id="GO:0070936">
    <property type="term" value="P:protein K48-linked ubiquitination"/>
    <property type="evidence" value="ECO:0000250"/>
    <property type="project" value="UniProtKB"/>
</dbReference>
<dbReference type="GO" id="GO:0070534">
    <property type="term" value="P:protein K63-linked ubiquitination"/>
    <property type="evidence" value="ECO:0000250"/>
    <property type="project" value="UniProtKB"/>
</dbReference>
<dbReference type="GO" id="GO:0016567">
    <property type="term" value="P:protein ubiquitination"/>
    <property type="evidence" value="ECO:0000318"/>
    <property type="project" value="GO_Central"/>
</dbReference>
<dbReference type="GO" id="GO:0043162">
    <property type="term" value="P:ubiquitin-dependent protein catabolic process via the multivesicular body sorting pathway"/>
    <property type="evidence" value="ECO:0000315"/>
    <property type="project" value="UniProtKB"/>
</dbReference>
<dbReference type="CDD" id="cd16800">
    <property type="entry name" value="RING-H2_RNF115"/>
    <property type="match status" value="1"/>
</dbReference>
<dbReference type="FunFam" id="3.30.40.10:FF:000069">
    <property type="entry name" value="E3 ubiquitin-protein ligase RNF115"/>
    <property type="match status" value="1"/>
</dbReference>
<dbReference type="Gene3D" id="3.30.40.10">
    <property type="entry name" value="Zinc/RING finger domain, C3HC4 (zinc finger)"/>
    <property type="match status" value="1"/>
</dbReference>
<dbReference type="InterPro" id="IPR051834">
    <property type="entry name" value="RING_finger_E3_ligase"/>
</dbReference>
<dbReference type="InterPro" id="IPR001841">
    <property type="entry name" value="Znf_RING"/>
</dbReference>
<dbReference type="InterPro" id="IPR013083">
    <property type="entry name" value="Znf_RING/FYVE/PHD"/>
</dbReference>
<dbReference type="PANTHER" id="PTHR45931:SF3">
    <property type="entry name" value="RING ZINC FINGER-CONTAINING PROTEIN"/>
    <property type="match status" value="1"/>
</dbReference>
<dbReference type="PANTHER" id="PTHR45931">
    <property type="entry name" value="SI:CH211-59O9.10"/>
    <property type="match status" value="1"/>
</dbReference>
<dbReference type="Pfam" id="PF13639">
    <property type="entry name" value="zf-RING_2"/>
    <property type="match status" value="1"/>
</dbReference>
<dbReference type="SMART" id="SM00184">
    <property type="entry name" value="RING"/>
    <property type="match status" value="1"/>
</dbReference>
<dbReference type="SUPFAM" id="SSF57850">
    <property type="entry name" value="RING/U-box"/>
    <property type="match status" value="1"/>
</dbReference>
<dbReference type="PROSITE" id="PS50089">
    <property type="entry name" value="ZF_RING_2"/>
    <property type="match status" value="1"/>
</dbReference>
<keyword id="KW-0007">Acetylation</keyword>
<keyword id="KW-0963">Cytoplasm</keyword>
<keyword id="KW-0256">Endoplasmic reticulum</keyword>
<keyword id="KW-0333">Golgi apparatus</keyword>
<keyword id="KW-0479">Metal-binding</keyword>
<keyword id="KW-0539">Nucleus</keyword>
<keyword id="KW-0597">Phosphoprotein</keyword>
<keyword id="KW-1267">Proteomics identification</keyword>
<keyword id="KW-1185">Reference proteome</keyword>
<keyword id="KW-0808">Transferase</keyword>
<keyword id="KW-0832">Ubl conjugation</keyword>
<keyword id="KW-0833">Ubl conjugation pathway</keyword>
<keyword id="KW-0862">Zinc</keyword>
<keyword id="KW-0863">Zinc-finger</keyword>
<name>RN115_HUMAN</name>
<protein>
    <recommendedName>
        <fullName evidence="16">E3 ubiquitin-protein ligase RNF115</fullName>
        <ecNumber evidence="6">2.3.2.27</ecNumber>
    </recommendedName>
    <alternativeName>
        <fullName evidence="17">RING finger protein 115</fullName>
    </alternativeName>
    <alternativeName>
        <fullName evidence="16">RING-type E3 ubiquitin transferase RNF115</fullName>
    </alternativeName>
    <alternativeName>
        <fullName evidence="1">Rab7-interacting RING finger protein</fullName>
        <shortName evidence="1">Rabring 7</shortName>
    </alternativeName>
    <alternativeName>
        <fullName evidence="15">Zinc finger protein 364</fullName>
    </alternativeName>
</protein>
<evidence type="ECO:0000250" key="1">
    <source>
        <dbReference type="UniProtKB" id="Q9D0C1"/>
    </source>
</evidence>
<evidence type="ECO:0000255" key="2">
    <source>
        <dbReference type="PROSITE-ProRule" id="PRU00175"/>
    </source>
</evidence>
<evidence type="ECO:0000256" key="3">
    <source>
        <dbReference type="SAM" id="MobiDB-lite"/>
    </source>
</evidence>
<evidence type="ECO:0000269" key="4">
    <source>
    </source>
</evidence>
<evidence type="ECO:0000269" key="5">
    <source>
    </source>
</evidence>
<evidence type="ECO:0000269" key="6">
    <source>
    </source>
</evidence>
<evidence type="ECO:0000269" key="7">
    <source>
    </source>
</evidence>
<evidence type="ECO:0000269" key="8">
    <source>
    </source>
</evidence>
<evidence type="ECO:0000269" key="9">
    <source>
    </source>
</evidence>
<evidence type="ECO:0000269" key="10">
    <source>
    </source>
</evidence>
<evidence type="ECO:0000269" key="11">
    <source>
    </source>
</evidence>
<evidence type="ECO:0000269" key="12">
    <source>
    </source>
</evidence>
<evidence type="ECO:0000269" key="13">
    <source>
    </source>
</evidence>
<evidence type="ECO:0000303" key="14">
    <source>
    </source>
</evidence>
<evidence type="ECO:0000303" key="15">
    <source ref="1"/>
</evidence>
<evidence type="ECO:0000305" key="16"/>
<evidence type="ECO:0000312" key="17">
    <source>
        <dbReference type="HGNC" id="HGNC:18154"/>
    </source>
</evidence>
<evidence type="ECO:0007744" key="18">
    <source>
    </source>
</evidence>
<proteinExistence type="evidence at protein level"/>
<reference key="1">
    <citation type="submission" date="2002-07" db="EMBL/GenBank/DDBJ databases">
        <title>Cloning and characterization of zinc finger protein 364, C3HC4 type (ZNF364), a novel human member of zinc finger protein family.</title>
        <authorList>
            <person name="Zhang D.L."/>
            <person name="Cai J.J."/>
            <person name="Ma D.L."/>
        </authorList>
    </citation>
    <scope>NUCLEOTIDE SEQUENCE [MRNA]</scope>
</reference>
<reference key="2">
    <citation type="submission" date="2001-09" db="EMBL/GenBank/DDBJ databases">
        <authorList>
            <person name="Guo J.H."/>
            <person name="She X.Y."/>
            <person name="Yu L."/>
        </authorList>
    </citation>
    <scope>NUCLEOTIDE SEQUENCE [LARGE SCALE MRNA]</scope>
</reference>
<reference key="3">
    <citation type="journal article" date="2004" name="Nat. Genet.">
        <title>Complete sequencing and characterization of 21,243 full-length human cDNAs.</title>
        <authorList>
            <person name="Ota T."/>
            <person name="Suzuki Y."/>
            <person name="Nishikawa T."/>
            <person name="Otsuki T."/>
            <person name="Sugiyama T."/>
            <person name="Irie R."/>
            <person name="Wakamatsu A."/>
            <person name="Hayashi K."/>
            <person name="Sato H."/>
            <person name="Nagai K."/>
            <person name="Kimura K."/>
            <person name="Makita H."/>
            <person name="Sekine M."/>
            <person name="Obayashi M."/>
            <person name="Nishi T."/>
            <person name="Shibahara T."/>
            <person name="Tanaka T."/>
            <person name="Ishii S."/>
            <person name="Yamamoto J."/>
            <person name="Saito K."/>
            <person name="Kawai Y."/>
            <person name="Isono Y."/>
            <person name="Nakamura Y."/>
            <person name="Nagahari K."/>
            <person name="Murakami K."/>
            <person name="Yasuda T."/>
            <person name="Iwayanagi T."/>
            <person name="Wagatsuma M."/>
            <person name="Shiratori A."/>
            <person name="Sudo H."/>
            <person name="Hosoiri T."/>
            <person name="Kaku Y."/>
            <person name="Kodaira H."/>
            <person name="Kondo H."/>
            <person name="Sugawara M."/>
            <person name="Takahashi M."/>
            <person name="Kanda K."/>
            <person name="Yokoi T."/>
            <person name="Furuya T."/>
            <person name="Kikkawa E."/>
            <person name="Omura Y."/>
            <person name="Abe K."/>
            <person name="Kamihara K."/>
            <person name="Katsuta N."/>
            <person name="Sato K."/>
            <person name="Tanikawa M."/>
            <person name="Yamazaki M."/>
            <person name="Ninomiya K."/>
            <person name="Ishibashi T."/>
            <person name="Yamashita H."/>
            <person name="Murakawa K."/>
            <person name="Fujimori K."/>
            <person name="Tanai H."/>
            <person name="Kimata M."/>
            <person name="Watanabe M."/>
            <person name="Hiraoka S."/>
            <person name="Chiba Y."/>
            <person name="Ishida S."/>
            <person name="Ono Y."/>
            <person name="Takiguchi S."/>
            <person name="Watanabe S."/>
            <person name="Yosida M."/>
            <person name="Hotuta T."/>
            <person name="Kusano J."/>
            <person name="Kanehori K."/>
            <person name="Takahashi-Fujii A."/>
            <person name="Hara H."/>
            <person name="Tanase T.-O."/>
            <person name="Nomura Y."/>
            <person name="Togiya S."/>
            <person name="Komai F."/>
            <person name="Hara R."/>
            <person name="Takeuchi K."/>
            <person name="Arita M."/>
            <person name="Imose N."/>
            <person name="Musashino K."/>
            <person name="Yuuki H."/>
            <person name="Oshima A."/>
            <person name="Sasaki N."/>
            <person name="Aotsuka S."/>
            <person name="Yoshikawa Y."/>
            <person name="Matsunawa H."/>
            <person name="Ichihara T."/>
            <person name="Shiohata N."/>
            <person name="Sano S."/>
            <person name="Moriya S."/>
            <person name="Momiyama H."/>
            <person name="Satoh N."/>
            <person name="Takami S."/>
            <person name="Terashima Y."/>
            <person name="Suzuki O."/>
            <person name="Nakagawa S."/>
            <person name="Senoh A."/>
            <person name="Mizoguchi H."/>
            <person name="Goto Y."/>
            <person name="Shimizu F."/>
            <person name="Wakebe H."/>
            <person name="Hishigaki H."/>
            <person name="Watanabe T."/>
            <person name="Sugiyama A."/>
            <person name="Takemoto M."/>
            <person name="Kawakami B."/>
            <person name="Yamazaki M."/>
            <person name="Watanabe K."/>
            <person name="Kumagai A."/>
            <person name="Itakura S."/>
            <person name="Fukuzumi Y."/>
            <person name="Fujimori Y."/>
            <person name="Komiyama M."/>
            <person name="Tashiro H."/>
            <person name="Tanigami A."/>
            <person name="Fujiwara T."/>
            <person name="Ono T."/>
            <person name="Yamada K."/>
            <person name="Fujii Y."/>
            <person name="Ozaki K."/>
            <person name="Hirao M."/>
            <person name="Ohmori Y."/>
            <person name="Kawabata A."/>
            <person name="Hikiji T."/>
            <person name="Kobatake N."/>
            <person name="Inagaki H."/>
            <person name="Ikema Y."/>
            <person name="Okamoto S."/>
            <person name="Okitani R."/>
            <person name="Kawakami T."/>
            <person name="Noguchi S."/>
            <person name="Itoh T."/>
            <person name="Shigeta K."/>
            <person name="Senba T."/>
            <person name="Matsumura K."/>
            <person name="Nakajima Y."/>
            <person name="Mizuno T."/>
            <person name="Morinaga M."/>
            <person name="Sasaki M."/>
            <person name="Togashi T."/>
            <person name="Oyama M."/>
            <person name="Hata H."/>
            <person name="Watanabe M."/>
            <person name="Komatsu T."/>
            <person name="Mizushima-Sugano J."/>
            <person name="Satoh T."/>
            <person name="Shirai Y."/>
            <person name="Takahashi Y."/>
            <person name="Nakagawa K."/>
            <person name="Okumura K."/>
            <person name="Nagase T."/>
            <person name="Nomura N."/>
            <person name="Kikuchi H."/>
            <person name="Masuho Y."/>
            <person name="Yamashita R."/>
            <person name="Nakai K."/>
            <person name="Yada T."/>
            <person name="Nakamura Y."/>
            <person name="Ohara O."/>
            <person name="Isogai T."/>
            <person name="Sugano S."/>
        </authorList>
    </citation>
    <scope>NUCLEOTIDE SEQUENCE [LARGE SCALE MRNA]</scope>
</reference>
<reference key="4">
    <citation type="journal article" date="2006" name="Nature">
        <title>The DNA sequence and biological annotation of human chromosome 1.</title>
        <authorList>
            <person name="Gregory S.G."/>
            <person name="Barlow K.F."/>
            <person name="McLay K.E."/>
            <person name="Kaul R."/>
            <person name="Swarbreck D."/>
            <person name="Dunham A."/>
            <person name="Scott C.E."/>
            <person name="Howe K.L."/>
            <person name="Woodfine K."/>
            <person name="Spencer C.C.A."/>
            <person name="Jones M.C."/>
            <person name="Gillson C."/>
            <person name="Searle S."/>
            <person name="Zhou Y."/>
            <person name="Kokocinski F."/>
            <person name="McDonald L."/>
            <person name="Evans R."/>
            <person name="Phillips K."/>
            <person name="Atkinson A."/>
            <person name="Cooper R."/>
            <person name="Jones C."/>
            <person name="Hall R.E."/>
            <person name="Andrews T.D."/>
            <person name="Lloyd C."/>
            <person name="Ainscough R."/>
            <person name="Almeida J.P."/>
            <person name="Ambrose K.D."/>
            <person name="Anderson F."/>
            <person name="Andrew R.W."/>
            <person name="Ashwell R.I.S."/>
            <person name="Aubin K."/>
            <person name="Babbage A.K."/>
            <person name="Bagguley C.L."/>
            <person name="Bailey J."/>
            <person name="Beasley H."/>
            <person name="Bethel G."/>
            <person name="Bird C.P."/>
            <person name="Bray-Allen S."/>
            <person name="Brown J.Y."/>
            <person name="Brown A.J."/>
            <person name="Buckley D."/>
            <person name="Burton J."/>
            <person name="Bye J."/>
            <person name="Carder C."/>
            <person name="Chapman J.C."/>
            <person name="Clark S.Y."/>
            <person name="Clarke G."/>
            <person name="Clee C."/>
            <person name="Cobley V."/>
            <person name="Collier R.E."/>
            <person name="Corby N."/>
            <person name="Coville G.J."/>
            <person name="Davies J."/>
            <person name="Deadman R."/>
            <person name="Dunn M."/>
            <person name="Earthrowl M."/>
            <person name="Ellington A.G."/>
            <person name="Errington H."/>
            <person name="Frankish A."/>
            <person name="Frankland J."/>
            <person name="French L."/>
            <person name="Garner P."/>
            <person name="Garnett J."/>
            <person name="Gay L."/>
            <person name="Ghori M.R.J."/>
            <person name="Gibson R."/>
            <person name="Gilby L.M."/>
            <person name="Gillett W."/>
            <person name="Glithero R.J."/>
            <person name="Grafham D.V."/>
            <person name="Griffiths C."/>
            <person name="Griffiths-Jones S."/>
            <person name="Grocock R."/>
            <person name="Hammond S."/>
            <person name="Harrison E.S.I."/>
            <person name="Hart E."/>
            <person name="Haugen E."/>
            <person name="Heath P.D."/>
            <person name="Holmes S."/>
            <person name="Holt K."/>
            <person name="Howden P.J."/>
            <person name="Hunt A.R."/>
            <person name="Hunt S.E."/>
            <person name="Hunter G."/>
            <person name="Isherwood J."/>
            <person name="James R."/>
            <person name="Johnson C."/>
            <person name="Johnson D."/>
            <person name="Joy A."/>
            <person name="Kay M."/>
            <person name="Kershaw J.K."/>
            <person name="Kibukawa M."/>
            <person name="Kimberley A.M."/>
            <person name="King A."/>
            <person name="Knights A.J."/>
            <person name="Lad H."/>
            <person name="Laird G."/>
            <person name="Lawlor S."/>
            <person name="Leongamornlert D.A."/>
            <person name="Lloyd D.M."/>
            <person name="Loveland J."/>
            <person name="Lovell J."/>
            <person name="Lush M.J."/>
            <person name="Lyne R."/>
            <person name="Martin S."/>
            <person name="Mashreghi-Mohammadi M."/>
            <person name="Matthews L."/>
            <person name="Matthews N.S.W."/>
            <person name="McLaren S."/>
            <person name="Milne S."/>
            <person name="Mistry S."/>
            <person name="Moore M.J.F."/>
            <person name="Nickerson T."/>
            <person name="O'Dell C.N."/>
            <person name="Oliver K."/>
            <person name="Palmeiri A."/>
            <person name="Palmer S.A."/>
            <person name="Parker A."/>
            <person name="Patel D."/>
            <person name="Pearce A.V."/>
            <person name="Peck A.I."/>
            <person name="Pelan S."/>
            <person name="Phelps K."/>
            <person name="Phillimore B.J."/>
            <person name="Plumb R."/>
            <person name="Rajan J."/>
            <person name="Raymond C."/>
            <person name="Rouse G."/>
            <person name="Saenphimmachak C."/>
            <person name="Sehra H.K."/>
            <person name="Sheridan E."/>
            <person name="Shownkeen R."/>
            <person name="Sims S."/>
            <person name="Skuce C.D."/>
            <person name="Smith M."/>
            <person name="Steward C."/>
            <person name="Subramanian S."/>
            <person name="Sycamore N."/>
            <person name="Tracey A."/>
            <person name="Tromans A."/>
            <person name="Van Helmond Z."/>
            <person name="Wall M."/>
            <person name="Wallis J.M."/>
            <person name="White S."/>
            <person name="Whitehead S.L."/>
            <person name="Wilkinson J.E."/>
            <person name="Willey D.L."/>
            <person name="Williams H."/>
            <person name="Wilming L."/>
            <person name="Wray P.W."/>
            <person name="Wu Z."/>
            <person name="Coulson A."/>
            <person name="Vaudin M."/>
            <person name="Sulston J.E."/>
            <person name="Durbin R.M."/>
            <person name="Hubbard T."/>
            <person name="Wooster R."/>
            <person name="Dunham I."/>
            <person name="Carter N.P."/>
            <person name="McVean G."/>
            <person name="Ross M.T."/>
            <person name="Harrow J."/>
            <person name="Olson M.V."/>
            <person name="Beck S."/>
            <person name="Rogers J."/>
            <person name="Bentley D.R."/>
        </authorList>
    </citation>
    <scope>NUCLEOTIDE SEQUENCE [LARGE SCALE GENOMIC DNA]</scope>
</reference>
<reference key="5">
    <citation type="submission" date="2005-07" db="EMBL/GenBank/DDBJ databases">
        <authorList>
            <person name="Mural R.J."/>
            <person name="Istrail S."/>
            <person name="Sutton G.G."/>
            <person name="Florea L."/>
            <person name="Halpern A.L."/>
            <person name="Mobarry C.M."/>
            <person name="Lippert R."/>
            <person name="Walenz B."/>
            <person name="Shatkay H."/>
            <person name="Dew I."/>
            <person name="Miller J.R."/>
            <person name="Flanigan M.J."/>
            <person name="Edwards N.J."/>
            <person name="Bolanos R."/>
            <person name="Fasulo D."/>
            <person name="Halldorsson B.V."/>
            <person name="Hannenhalli S."/>
            <person name="Turner R."/>
            <person name="Yooseph S."/>
            <person name="Lu F."/>
            <person name="Nusskern D.R."/>
            <person name="Shue B.C."/>
            <person name="Zheng X.H."/>
            <person name="Zhong F."/>
            <person name="Delcher A.L."/>
            <person name="Huson D.H."/>
            <person name="Kravitz S.A."/>
            <person name="Mouchard L."/>
            <person name="Reinert K."/>
            <person name="Remington K.A."/>
            <person name="Clark A.G."/>
            <person name="Waterman M.S."/>
            <person name="Eichler E.E."/>
            <person name="Adams M.D."/>
            <person name="Hunkapiller M.W."/>
            <person name="Myers E.W."/>
            <person name="Venter J.C."/>
        </authorList>
    </citation>
    <scope>NUCLEOTIDE SEQUENCE [LARGE SCALE GENOMIC DNA]</scope>
</reference>
<reference key="6">
    <citation type="journal article" date="2004" name="Genome Res.">
        <title>The status, quality, and expansion of the NIH full-length cDNA project: the Mammalian Gene Collection (MGC).</title>
        <authorList>
            <consortium name="The MGC Project Team"/>
        </authorList>
    </citation>
    <scope>NUCLEOTIDE SEQUENCE [LARGE SCALE MRNA]</scope>
    <source>
        <tissue>Pancreas</tissue>
        <tissue>Skin</tissue>
    </source>
</reference>
<reference key="7">
    <citation type="submission" date="1999-06" db="EMBL/GenBank/DDBJ databases">
        <authorList>
            <consortium name="The European IMAGE consortium"/>
        </authorList>
    </citation>
    <scope>NUCLEOTIDE SEQUENCE [LARGE SCALE MRNA] OF 73-304</scope>
    <source>
        <tissue>Uterus</tissue>
    </source>
</reference>
<reference key="8">
    <citation type="journal article" date="2005" name="Cancer Res.">
        <title>A novel RING-type ubiquitin ligase breast cancer-associated gene 2 correlates with outcome in invasive breast cancer.</title>
        <authorList>
            <person name="Burger A.M."/>
            <person name="Gao Y."/>
            <person name="Amemiya Y."/>
            <person name="Kahn H.J."/>
            <person name="Kitching R."/>
            <person name="Yang Y."/>
            <person name="Sun P."/>
            <person name="Narod S.A."/>
            <person name="Hanna W.M."/>
            <person name="Seth A.K."/>
        </authorList>
    </citation>
    <scope>FUNCTION</scope>
    <scope>AUTOUBIQUITINATION</scope>
    <scope>TISSUE SPECIFICITY</scope>
</reference>
<reference key="9">
    <citation type="journal article" date="2006" name="Neoplasia">
        <title>Novel RING E3 ubiquitin ligases in breast cancer.</title>
        <authorList>
            <person name="Burger A."/>
            <person name="Amemiya Y."/>
            <person name="Kitching R."/>
            <person name="Seth A.K."/>
        </authorList>
    </citation>
    <scope>INTERACTION WITH RAB7A</scope>
</reference>
<reference key="10">
    <citation type="journal article" date="2008" name="Mol. Cancer Res.">
        <title>Autoubiquitination of BCA2 RING E3 ligase regulates its own stability and affects cell migration.</title>
        <authorList>
            <person name="Amemiya Y."/>
            <person name="Azmi P."/>
            <person name="Seth A."/>
        </authorList>
    </citation>
    <scope>FUNCTION</scope>
    <scope>PATHWAY</scope>
    <scope>CATALYTIC ACTIVITY</scope>
    <scope>AUTOUBIQUITINATION</scope>
    <scope>MUTAGENESIS OF LYS-26; LYS-32; CYS-228 AND CYS-231</scope>
</reference>
<reference key="11">
    <citation type="journal article" date="2009" name="Anal. Chem.">
        <title>Lys-N and trypsin cover complementary parts of the phosphoproteome in a refined SCX-based approach.</title>
        <authorList>
            <person name="Gauci S."/>
            <person name="Helbig A.O."/>
            <person name="Slijper M."/>
            <person name="Krijgsveld J."/>
            <person name="Heck A.J."/>
            <person name="Mohammed S."/>
        </authorList>
    </citation>
    <scope>ACETYLATION [LARGE SCALE ANALYSIS] AT ALA-2</scope>
    <scope>CLEAVAGE OF INITIATOR METHIONINE [LARGE SCALE ANALYSIS]</scope>
    <scope>IDENTIFICATION BY MASS SPECTROMETRY [LARGE SCALE ANALYSIS]</scope>
</reference>
<reference key="12">
    <citation type="journal article" date="2009" name="PLoS Pathog.">
        <title>BCA2/Rabring7 promotes tetherin-dependent HIV-1 restriction.</title>
        <authorList>
            <person name="Miyakawa K."/>
            <person name="Ryo A."/>
            <person name="Murakami T."/>
            <person name="Ohba K."/>
            <person name="Yamaoka S."/>
            <person name="Fukuda M."/>
            <person name="Guatelli J."/>
            <person name="Yamamoto N."/>
        </authorList>
    </citation>
    <scope>FUNCTION</scope>
    <scope>SUBCELLULAR LOCATION</scope>
    <scope>INTERACTION WITH BST2</scope>
    <scope>MUTAGENESIS OF CYS-228 AND CYS-231</scope>
</reference>
<reference key="13">
    <citation type="journal article" date="2013" name="J. Cell Sci.">
        <title>The E3 ubiquitin ligases RNF126 and Rabring7 regulate endosomal sorting of the epidermal growth factor receptor.</title>
        <authorList>
            <person name="Smith C.J."/>
            <person name="Berry D.M."/>
            <person name="McGlade C.J."/>
        </authorList>
    </citation>
    <scope>FUNCTION</scope>
    <scope>INTERACTION WITH EGFR AND FLT3</scope>
</reference>
<reference key="14">
    <citation type="journal article" date="2014" name="PLoS Pathog.">
        <title>BCA2/Rabring7 targets HIV-1 Gag for lysosomal degradation in a tetherin-independent manner.</title>
        <authorList>
            <person name="Nityanandam R."/>
            <person name="Serra-Moreno R."/>
        </authorList>
    </citation>
    <scope>FUNCTION</scope>
    <scope>SUBCELLULAR LOCATION</scope>
</reference>
<reference key="15">
    <citation type="journal article" date="2019" name="Cancer Sci.">
        <title>Deubiquitinase ubiquitin-specific protease 9X regulates the stability and function of E3 ubiquitin ligase ring finger protein 115 in breast cancer cells.</title>
        <authorList>
            <person name="Lu Q."/>
            <person name="Lu D."/>
            <person name="Shao Z.M."/>
            <person name="Li D.Q."/>
        </authorList>
    </citation>
    <scope>DEUBIQUITINATION BY USP9X</scope>
    <scope>FUNCTION</scope>
</reference>
<reference key="16">
    <citation type="journal article" date="2020" name="Cell Death Dis.">
        <title>RNF115 deletion inhibits autophagosome maturation and growth of gastric cancer.</title>
        <authorList>
            <person name="Li R."/>
            <person name="Gu Z."/>
            <person name="Zhang X."/>
            <person name="Yu J."/>
            <person name="Feng J."/>
            <person name="Lou Y."/>
            <person name="Lv P."/>
            <person name="Chen Y."/>
        </authorList>
    </citation>
    <scope>FUNCTION</scope>
    <scope>INTERACTION WITH STX17</scope>
</reference>
<reference key="17">
    <citation type="journal article" date="2020" name="Nat. Commun.">
        <title>RNF115 plays dual roles in innate antiviral responses by catalyzing distinct ubiquitination of MAVS and MITA.</title>
        <authorList>
            <person name="Zhang Z.D."/>
            <person name="Xiong T.C."/>
            <person name="Yao S.Q."/>
            <person name="Wei M.C."/>
            <person name="Chen M."/>
            <person name="Lin D."/>
            <person name="Zhong B."/>
        </authorList>
    </citation>
    <scope>FUNCTION</scope>
    <scope>CATALYTIC ACTIVITY</scope>
    <scope>MUTAGENESIS OF CYS-228 AND CYS-231</scope>
</reference>
<reference key="18">
    <citation type="journal article" date="2022" name="Adv. Sci.">
        <title>RNF115 Inhibits the Post-ER Trafficking of TLRs and TLRs-Mediated Immune Responses by Catalyzing K11-Linked Ubiquitination of RAB1A and RAB13.</title>
        <authorList>
            <person name="Zhang Z.D."/>
            <person name="Li H.X."/>
            <person name="Gan H."/>
            <person name="Tang Z."/>
            <person name="Guo Y.Y."/>
            <person name="Yao S.Q."/>
            <person name="Liuyu T."/>
            <person name="Zhong B."/>
            <person name="Lin D."/>
        </authorList>
    </citation>
    <scope>FUNCTION</scope>
    <scope>PHOSPHORYLATION AT SER-132 AND SER-133</scope>
    <scope>MUTAGENESIS OF SER-132 AND SER-133</scope>
    <scope>INTERACTION WITH YWHAE</scope>
    <scope>SUBCELLULAR LOCATION</scope>
</reference>
<accession>Q9Y4L5</accession>
<accession>A8K3Y4</accession>
<accession>Q5T2V9</accession>
<accession>Q7Z2J2</accession>
<organism>
    <name type="scientific">Homo sapiens</name>
    <name type="common">Human</name>
    <dbReference type="NCBI Taxonomy" id="9606"/>
    <lineage>
        <taxon>Eukaryota</taxon>
        <taxon>Metazoa</taxon>
        <taxon>Chordata</taxon>
        <taxon>Craniata</taxon>
        <taxon>Vertebrata</taxon>
        <taxon>Euteleostomi</taxon>
        <taxon>Mammalia</taxon>
        <taxon>Eutheria</taxon>
        <taxon>Euarchontoglires</taxon>
        <taxon>Primates</taxon>
        <taxon>Haplorrhini</taxon>
        <taxon>Catarrhini</taxon>
        <taxon>Hominidae</taxon>
        <taxon>Homo</taxon>
    </lineage>
</organism>
<comment type="function">
    <text evidence="4 6 7 9 11 12 13 14">E3 ubiquitin-protein ligase that catalyzes the 'Lys-48'- and/or 'Lys-63'-linked polyubiquitination of various substrates and thereby plays a role in a number of signaling pathways including autophagy, innate immunity, cell proliferation and cell death (PubMed:20019814, PubMed:30689267). Plays a role in the endosomal trafficking and degradation of membrane receptors including EGFR, FLT3, MET and CXCR4 through their polyubiquitination. Participates together with BST2 in antiviral immunity by facilitating the internalization of HIV-1 virions into intracellular vesicles leading to their lysosomal degradation (PubMed:20019814). Also possesses an antiviral activity independently of BST2 by promoting retroviral GAG proteins ubiquitination, redistribution to endo-lysosomal compartments and, ultimately, lysosomal degradation (PubMed:24852021). Catalyzes distinct types of ubiquitination on MAVS and STING1 at different phases of viral infection to promote innate antiviral response (PubMed:33139700). Mediates the 'Lys-48'-linked ubiquitination of MAVS leading to its proteasomal degradation and ubiquitinates STING1 via 'Lys-63'-linked polyubiquitination, critical for its oligomerization and the subsequent recruitment of TBK1 (PubMed:33139700). Plays a positive role in the autophagosome-lysosome fusion by interacting with STX17 and enhancing its stability without affecting 'Lys-48'- or 'Lys-63'-linked polyubiquitination levels, which in turn promotes autophagosome maturation (PubMed:32980859). Negatively regulates TLR-induced expression of proinflammatory cytokines by catalyzing 'Lys-11'-linked ubiquitination of RAB1A and RAB13 to inhibit post-ER trafficking of TLRs to the Golgi by RAB1A and subsequently from the Golgi apparatus to the cell surface by RAB13 (PubMed:35343654).</text>
</comment>
<comment type="catalytic activity">
    <reaction evidence="6">
        <text>S-ubiquitinyl-[E2 ubiquitin-conjugating enzyme]-L-cysteine + [acceptor protein]-L-lysine = [E2 ubiquitin-conjugating enzyme]-L-cysteine + N(6)-ubiquitinyl-[acceptor protein]-L-lysine.</text>
        <dbReference type="EC" id="2.3.2.27"/>
    </reaction>
</comment>
<comment type="pathway">
    <text evidence="6">Protein modification; protein ubiquitination.</text>
</comment>
<comment type="subunit">
    <text evidence="5 7 8 11 13">Interacts with RAB7A. Interacts with EGFR and FLT3. Interacts with BST2 (PubMed:20019814). Interacts with STX17 (PubMed:32980859). Interacts with YWHAE (PubMed:35343654).</text>
</comment>
<comment type="interaction">
    <interactant intactId="EBI-2129242">
        <id>Q9Y4L5</id>
    </interactant>
    <interactant intactId="EBI-724310">
        <id>Q15038</id>
        <label>DAZAP2</label>
    </interactant>
    <organismsDiffer>false</organismsDiffer>
    <experiments>5</experiments>
</comment>
<comment type="interaction">
    <interactant intactId="EBI-2129242">
        <id>Q9Y4L5</id>
    </interactant>
    <interactant intactId="EBI-389668">
        <id>Q00987</id>
        <label>MDM2</label>
    </interactant>
    <organismsDiffer>false</organismsDiffer>
    <experiments>2</experiments>
</comment>
<comment type="interaction">
    <interactant intactId="EBI-2129242">
        <id>Q9Y4L5</id>
    </interactant>
    <interactant intactId="EBI-398437">
        <id>O15151</id>
        <label>MDM4</label>
    </interactant>
    <organismsDiffer>false</organismsDiffer>
    <experiments>3</experiments>
</comment>
<comment type="interaction">
    <interactant intactId="EBI-2129242">
        <id>Q9Y4L5</id>
    </interactant>
    <interactant intactId="EBI-743540">
        <id>P51668</id>
        <label>UBE2D1</label>
    </interactant>
    <organismsDiffer>false</organismsDiffer>
    <experiments>12</experiments>
</comment>
<comment type="interaction">
    <interactant intactId="EBI-2129242">
        <id>Q9Y4L5</id>
    </interactant>
    <interactant intactId="EBI-347677">
        <id>P62837</id>
        <label>UBE2D2</label>
    </interactant>
    <organismsDiffer>false</organismsDiffer>
    <experiments>6</experiments>
</comment>
<comment type="interaction">
    <interactant intactId="EBI-2129242">
        <id>Q9Y4L5</id>
    </interactant>
    <interactant intactId="EBI-348268">
        <id>P61077</id>
        <label>UBE2D3</label>
    </interactant>
    <organismsDiffer>false</organismsDiffer>
    <experiments>11</experiments>
</comment>
<comment type="interaction">
    <interactant intactId="EBI-2129242">
        <id>Q9Y4L5</id>
    </interactant>
    <interactant intactId="EBI-745527">
        <id>Q9Y2X8</id>
        <label>UBE2D4</label>
    </interactant>
    <organismsDiffer>false</organismsDiffer>
    <experiments>12</experiments>
</comment>
<comment type="interaction">
    <interactant intactId="EBI-2129242">
        <id>Q9Y4L5</id>
    </interactant>
    <interactant intactId="EBI-2129763">
        <id>Q96LR5</id>
        <label>UBE2E2</label>
    </interactant>
    <organismsDiffer>false</organismsDiffer>
    <experiments>6</experiments>
</comment>
<comment type="interaction">
    <interactant intactId="EBI-2129242">
        <id>Q9Y4L5</id>
    </interactant>
    <interactant intactId="EBI-348496">
        <id>Q969T4</id>
        <label>UBE2E3</label>
    </interactant>
    <organismsDiffer>false</organismsDiffer>
    <experiments>4</experiments>
</comment>
<comment type="interaction">
    <interactant intactId="EBI-2129242">
        <id>Q9Y4L5</id>
    </interactant>
    <interactant intactId="EBI-355164">
        <id>P55072</id>
        <label>VCP</label>
    </interactant>
    <organismsDiffer>false</organismsDiffer>
    <experiments>3</experiments>
</comment>
<comment type="subcellular location">
    <subcellularLocation>
        <location evidence="7 9">Cytoplasm</location>
    </subcellularLocation>
    <subcellularLocation>
        <location evidence="9">Nucleus</location>
    </subcellularLocation>
    <subcellularLocation>
        <location evidence="13">Endoplasmic reticulum</location>
    </subcellularLocation>
    <subcellularLocation>
        <location evidence="13">Golgi apparatus</location>
    </subcellularLocation>
    <text evidence="7 9">The GTP-bound form of RAB7A recruits RNF115 from the cytosol onto late endosomes/lysosomes.</text>
</comment>
<comment type="tissue specificity">
    <text evidence="4">Expressed at extremely low levels in normal breast, prostate, lung, colon. Higher levels of expression are detected in heart, skeletal muscle, testis as well as in breast and prostate cancer cells.</text>
</comment>
<comment type="PTM">
    <text evidence="13">Phosphorylated by AKT1, allowing association with the 14-3-3 chaperones that facilitates associating with TLRs.</text>
</comment>
<comment type="PTM">
    <text evidence="4 6">RING-type zinc finger-dependent and E2-dependent autoubiquitination.</text>
</comment>
<comment type="PTM">
    <text evidence="10">Deubiquitinated by USP9X; antogonizing its autoubiquitination and subsequent proteasomal degradation.</text>
</comment>
<feature type="initiator methionine" description="Removed" evidence="18">
    <location>
        <position position="1"/>
    </location>
</feature>
<feature type="chain" id="PRO_0000056314" description="E3 ubiquitin-protein ligase RNF115">
    <location>
        <begin position="2"/>
        <end position="304"/>
    </location>
</feature>
<feature type="zinc finger region" description="RING-type" evidence="2">
    <location>
        <begin position="228"/>
        <end position="269"/>
    </location>
</feature>
<feature type="region of interest" description="Disordered" evidence="3">
    <location>
        <begin position="95"/>
        <end position="138"/>
    </location>
</feature>
<feature type="region of interest" description="Disordered" evidence="3">
    <location>
        <begin position="272"/>
        <end position="304"/>
    </location>
</feature>
<feature type="compositionally biased region" description="Basic and acidic residues" evidence="3">
    <location>
        <begin position="98"/>
        <end position="110"/>
    </location>
</feature>
<feature type="compositionally biased region" description="Polar residues" evidence="3">
    <location>
        <begin position="279"/>
        <end position="296"/>
    </location>
</feature>
<feature type="modified residue" description="N-acetylalanine" evidence="18">
    <location>
        <position position="2"/>
    </location>
</feature>
<feature type="modified residue" description="Phosphoserine; by PKB/AKT1" evidence="13">
    <location>
        <position position="132"/>
    </location>
</feature>
<feature type="modified residue" description="Phosphoserine; by PKB/AKT1" evidence="13">
    <location>
        <position position="133"/>
    </location>
</feature>
<feature type="sequence variant" id="VAR_052105" description="In dbSNP:rs11577731.">
    <original>G</original>
    <variation>R</variation>
    <location>
        <position position="194"/>
    </location>
</feature>
<feature type="mutagenesis site" description="Loss of autoubiquitination; when associated with R-32." evidence="6">
    <original>K</original>
    <variation>R</variation>
    <location>
        <position position="26"/>
    </location>
</feature>
<feature type="mutagenesis site" description="Loss of autoubiquitination; when associated with R-26." evidence="6">
    <original>K</original>
    <variation>R</variation>
    <location>
        <position position="32"/>
    </location>
</feature>
<feature type="mutagenesis site" description="About 50% loss of phosphorylation; when associated with A-133." evidence="13">
    <original>S</original>
    <variation>A</variation>
    <location>
        <position position="132"/>
    </location>
</feature>
<feature type="mutagenesis site" description="About 50% loss of phosphorylation; when associated with A-132." evidence="13">
    <original>S</original>
    <variation>A</variation>
    <location>
        <position position="133"/>
    </location>
</feature>
<feature type="mutagenesis site" description="Loss of autoubiquitination." evidence="6">
    <original>C</original>
    <variation>A</variation>
    <location>
        <position position="228"/>
    </location>
</feature>
<feature type="mutagenesis site" description="Loss of E3 ligase activity. Maintains the ability to restrict viral particle production; when associated with A-232." evidence="7 12">
    <original>C</original>
    <variation>A</variation>
    <location>
        <position position="228"/>
    </location>
</feature>
<feature type="mutagenesis site" description="Loss of autoubiquitination." evidence="6">
    <original>C</original>
    <variation>A</variation>
    <location>
        <position position="231"/>
    </location>
</feature>
<feature type="mutagenesis site" description="Loss of E3 ligase activity. Maintains the ability to restrict viral particle production; when associated with A-228." evidence="7 12">
    <original>C</original>
    <variation>A</variation>
    <location>
        <position position="231"/>
    </location>
</feature>
<feature type="sequence conflict" description="In Ref. 7; CAB45280." evidence="16" ref="7">
    <original>H</original>
    <variation>N</variation>
    <location>
        <position position="299"/>
    </location>
</feature>
<gene>
    <name evidence="17" type="primary">RNF115</name>
    <name evidence="15" type="synonym">ZNF364</name>
</gene>
<sequence length="304" mass="33703">MAEASAAGADSGAAVAAHRFFCHFCKGEVSPKLPEYICPRCESGFIEEVTDDSSFLGGGGSRIDNTTTTHFAELWGHLDHTMFFQDFRPFLSSSPLDQDNRANERGHQTHTDFWGARPPRLPLGRRYRSRGSSRPDRSPAIEGILQHIFAGFFANSAIPGSPHPFSWSGMLHSNPGDYAWGQTGLDAIVTQLLGQLENTGPPPADKEKITSLPTVTVTQEQVDMGLECPVCKEDYTVEEEVRQLPCNHFFHSSCIVPWLELHDTCPVCRKSLNGEDSTRQSQSTEASASNRFSNDSQLHDRWTF</sequence>